<sequence>MLPVITRFARPALMAIRPVNAMGVLRASSITKRLYHPKVIEHYTHPRNVGSLDKKLPNVGTGLVGAPACGDVMRLQIKVNDSTGVIEDVKFKTFGCGSAIASSSYMTELVQGMTLDDAAKIKNTEIAKELSLPPVKLHCSMLAEDAIKAAIKDYKSKRNTPTMLS</sequence>
<organism evidence="27">
    <name type="scientific">Saccharomyces cerevisiae (strain ATCC 204508 / S288c)</name>
    <name type="common">Baker's yeast</name>
    <dbReference type="NCBI Taxonomy" id="559292"/>
    <lineage>
        <taxon>Eukaryota</taxon>
        <taxon>Fungi</taxon>
        <taxon>Dikarya</taxon>
        <taxon>Ascomycota</taxon>
        <taxon>Saccharomycotina</taxon>
        <taxon>Saccharomycetes</taxon>
        <taxon>Saccharomycetales</taxon>
        <taxon>Saccharomycetaceae</taxon>
        <taxon>Saccharomyces</taxon>
    </lineage>
</organism>
<keyword id="KW-0001">2Fe-2S</keyword>
<keyword id="KW-0002">3D-structure</keyword>
<keyword id="KW-0408">Iron</keyword>
<keyword id="KW-0411">Iron-sulfur</keyword>
<keyword id="KW-0479">Metal-binding</keyword>
<keyword id="KW-0496">Mitochondrion</keyword>
<keyword id="KW-1185">Reference proteome</keyword>
<keyword id="KW-0809">Transit peptide</keyword>
<proteinExistence type="evidence at protein level"/>
<reference key="1">
    <citation type="journal article" date="1997" name="Nature">
        <title>The nucleotide sequence of Saccharomyces cerevisiae chromosome XVI.</title>
        <authorList>
            <person name="Bussey H."/>
            <person name="Storms R.K."/>
            <person name="Ahmed A."/>
            <person name="Albermann K."/>
            <person name="Allen E."/>
            <person name="Ansorge W."/>
            <person name="Araujo R."/>
            <person name="Aparicio A."/>
            <person name="Barrell B.G."/>
            <person name="Badcock K."/>
            <person name="Benes V."/>
            <person name="Botstein D."/>
            <person name="Bowman S."/>
            <person name="Brueckner M."/>
            <person name="Carpenter J."/>
            <person name="Cherry J.M."/>
            <person name="Chung E."/>
            <person name="Churcher C.M."/>
            <person name="Coster F."/>
            <person name="Davis K."/>
            <person name="Davis R.W."/>
            <person name="Dietrich F.S."/>
            <person name="Delius H."/>
            <person name="DiPaolo T."/>
            <person name="Dubois E."/>
            <person name="Duesterhoeft A."/>
            <person name="Duncan M."/>
            <person name="Floeth M."/>
            <person name="Fortin N."/>
            <person name="Friesen J.D."/>
            <person name="Fritz C."/>
            <person name="Goffeau A."/>
            <person name="Hall J."/>
            <person name="Hebling U."/>
            <person name="Heumann K."/>
            <person name="Hilbert H."/>
            <person name="Hillier L.W."/>
            <person name="Hunicke-Smith S."/>
            <person name="Hyman R.W."/>
            <person name="Johnston M."/>
            <person name="Kalman S."/>
            <person name="Kleine K."/>
            <person name="Komp C."/>
            <person name="Kurdi O."/>
            <person name="Lashkari D."/>
            <person name="Lew H."/>
            <person name="Lin A."/>
            <person name="Lin D."/>
            <person name="Louis E.J."/>
            <person name="Marathe R."/>
            <person name="Messenguy F."/>
            <person name="Mewes H.-W."/>
            <person name="Mirtipati S."/>
            <person name="Moestl D."/>
            <person name="Mueller-Auer S."/>
            <person name="Namath A."/>
            <person name="Nentwich U."/>
            <person name="Oefner P."/>
            <person name="Pearson D."/>
            <person name="Petel F.X."/>
            <person name="Pohl T.M."/>
            <person name="Purnelle B."/>
            <person name="Rajandream M.A."/>
            <person name="Rechmann S."/>
            <person name="Rieger M."/>
            <person name="Riles L."/>
            <person name="Roberts D."/>
            <person name="Schaefer M."/>
            <person name="Scharfe M."/>
            <person name="Scherens B."/>
            <person name="Schramm S."/>
            <person name="Schroeder M."/>
            <person name="Sdicu A.-M."/>
            <person name="Tettelin H."/>
            <person name="Urrestarazu L.A."/>
            <person name="Ushinsky S."/>
            <person name="Vierendeels F."/>
            <person name="Vissers S."/>
            <person name="Voss H."/>
            <person name="Walsh S.V."/>
            <person name="Wambutt R."/>
            <person name="Wang Y."/>
            <person name="Wedler E."/>
            <person name="Wedler H."/>
            <person name="Winnett E."/>
            <person name="Zhong W.-W."/>
            <person name="Zollner A."/>
            <person name="Vo D.H."/>
            <person name="Hani J."/>
        </authorList>
    </citation>
    <scope>NUCLEOTIDE SEQUENCE [LARGE SCALE GENOMIC DNA]</scope>
    <source>
        <strain>ATCC 204508 / S288c</strain>
    </source>
</reference>
<reference key="2">
    <citation type="journal article" date="2014" name="G3 (Bethesda)">
        <title>The reference genome sequence of Saccharomyces cerevisiae: Then and now.</title>
        <authorList>
            <person name="Engel S.R."/>
            <person name="Dietrich F.S."/>
            <person name="Fisk D.G."/>
            <person name="Binkley G."/>
            <person name="Balakrishnan R."/>
            <person name="Costanzo M.C."/>
            <person name="Dwight S.S."/>
            <person name="Hitz B.C."/>
            <person name="Karra K."/>
            <person name="Nash R.S."/>
            <person name="Weng S."/>
            <person name="Wong E.D."/>
            <person name="Lloyd P."/>
            <person name="Skrzypek M.S."/>
            <person name="Miyasato S.R."/>
            <person name="Simison M."/>
            <person name="Cherry J.M."/>
        </authorList>
    </citation>
    <scope>GENOME REANNOTATION</scope>
    <source>
        <strain>ATCC 204508 / S288c</strain>
    </source>
</reference>
<reference key="3">
    <citation type="journal article" date="1999" name="J. Mol. Biol.">
        <title>Saccharomyces cerevisiae ISU1 and ISU2: members of a well-conserved gene family for iron-sulfur cluster assembly.</title>
        <authorList>
            <person name="Garland S.A."/>
            <person name="Hoff K."/>
            <person name="Vickery L.E."/>
            <person name="Culotta V.C."/>
        </authorList>
    </citation>
    <scope>FUNCTION</scope>
    <scope>PATHWAY</scope>
    <scope>SUBCELLULAR LOCATION</scope>
    <scope>DISRUPTION PHENOTYPE</scope>
    <scope>MUTAGENESIS OF CYS-69; CYS-96 AND CYS-139</scope>
</reference>
<reference key="4">
    <citation type="journal article" date="1999" name="Proc. Natl. Acad. Sci. U.S.A.">
        <title>Evidence for a conserved system for iron metabolism in the mitochondria of Saccharomyces cerevisiae.</title>
        <authorList>
            <person name="Schilke B."/>
            <person name="Voisine C."/>
            <person name="Beinert H."/>
            <person name="Craig E."/>
        </authorList>
    </citation>
    <scope>SUBCELLULAR LOCATION</scope>
    <scope>DISRUPTION PHENOTYPE</scope>
</reference>
<reference key="5">
    <citation type="journal article" date="2003" name="EMBO J.">
        <title>Components involved in assembly and dislocation of iron-sulfur clusters on the scaffold protein Isu1p.</title>
        <authorList>
            <person name="Muehlenhoff U."/>
            <person name="Gerber J."/>
            <person name="Richhardt N."/>
            <person name="Lill R."/>
        </authorList>
    </citation>
    <scope>FUNCTION</scope>
    <scope>COFACTOR</scope>
</reference>
<reference key="6">
    <citation type="journal article" date="2003" name="EMBO Rep.">
        <title>An interaction between frataxin and Isu1/Nfs1 that is crucial for Fe/S cluster synthesis on Isu1.</title>
        <authorList>
            <person name="Gerber J."/>
            <person name="Muhlenhoff U."/>
            <person name="Lill R."/>
        </authorList>
    </citation>
    <scope>INTERACTION WITH FRATAXIN</scope>
</reference>
<reference key="7">
    <citation type="journal article" date="2003" name="J. Biol. Chem.">
        <title>Ssq1, a mitochondrial Hsp70 involved in iron-sulfur (Fe/S) center biogenesis. Similarities to and differences from its bacterial counterpart.</title>
        <authorList>
            <person name="Dutkiewicz R."/>
            <person name="Schilke B."/>
            <person name="Knieszner H."/>
            <person name="Walter W."/>
            <person name="Craig E.A."/>
            <person name="Marszalek J."/>
        </authorList>
    </citation>
    <scope>INTERACTION WITH JAC1 AND SSQ1</scope>
</reference>
<reference key="8">
    <citation type="journal article" date="2003" name="Nature">
        <title>Global analysis of protein expression in yeast.</title>
        <authorList>
            <person name="Ghaemmaghami S."/>
            <person name="Huh W.-K."/>
            <person name="Bower K."/>
            <person name="Howson R.W."/>
            <person name="Belle A."/>
            <person name="Dephoure N."/>
            <person name="O'Shea E.K."/>
            <person name="Weissman J.S."/>
        </authorList>
    </citation>
    <scope>LEVEL OF PROTEIN EXPRESSION [LARGE SCALE ANALYSIS]</scope>
</reference>
<reference key="9">
    <citation type="journal article" date="2004" name="FEBS Lett.">
        <title>Mitochondrial functional interactions between frataxin and Isu1p, the iron-sulfur cluster scaffold protein, in Saccharomyces cerevisiae.</title>
        <authorList>
            <person name="Ramazzotti A."/>
            <person name="Vanmansart V."/>
            <person name="Foury F."/>
        </authorList>
    </citation>
    <scope>FUNCTION</scope>
    <scope>INTERACTION WITH FRATAXIN</scope>
</reference>
<reference key="10">
    <citation type="journal article" date="2004" name="J. Biol. Chem.">
        <title>Sequence-specific interaction between mitochondrial Fe-S scaffold protein Isu and Hsp70 Ssq1 is essential for their in vivo function.</title>
        <authorList>
            <person name="Dutkiewicz R."/>
            <person name="Schilke B."/>
            <person name="Cheng S."/>
            <person name="Knieszner H."/>
            <person name="Craig E.A."/>
            <person name="Marszalek J."/>
        </authorList>
    </citation>
    <scope>FUNCTION</scope>
    <scope>INTERACTION WITH JAC1 AND SSQ1</scope>
    <scope>MUTAGENESIS OF LEU-132; PRO-133; PRO-134; VAL-135 AND LYS-136</scope>
</reference>
<reference key="11">
    <citation type="journal article" date="2004" name="Mol. Cell. Biol.">
        <title>The yeast scaffold proteins Isu1p and Isu2p are required inside mitochondria for maturation of cytosolic Fe/S proteins.</title>
        <authorList>
            <person name="Gerber J."/>
            <person name="Neumann K."/>
            <person name="Prohl C."/>
            <person name="Muehlenhoff U."/>
            <person name="Lill R."/>
        </authorList>
    </citation>
    <scope>FUNCTION</scope>
    <scope>SUBCELLULAR LOCATION</scope>
</reference>
<reference key="12">
    <citation type="journal article" date="2006" name="EMBO J.">
        <title>Essential role of Isd11 in mitochondrial iron-sulfur cluster synthesis on Isu scaffold proteins.</title>
        <authorList>
            <person name="Wiedemann N."/>
            <person name="Urzica E."/>
            <person name="Guiard B."/>
            <person name="Mueller H."/>
            <person name="Lohaus C."/>
            <person name="Meyer H.E."/>
            <person name="Ryan M.T."/>
            <person name="Meisinger C."/>
            <person name="Muehlenhoff U."/>
            <person name="Lill R."/>
            <person name="Pfanner N."/>
        </authorList>
    </citation>
    <scope>FUNCTION</scope>
</reference>
<reference key="13">
    <citation type="journal article" date="2006" name="J. Biol. Chem.">
        <title>The Hsp70 chaperone Ssq1p is dispensable for iron-sulfur cluster formation on the scaffold protein Isu1p.</title>
        <authorList>
            <person name="Dutkiewicz R."/>
            <person name="Marszalek J."/>
            <person name="Schilke B."/>
            <person name="Craig E.A."/>
            <person name="Lill R."/>
            <person name="Muehlenhoff U."/>
        </authorList>
    </citation>
    <scope>FUNCTION</scope>
</reference>
<reference key="14">
    <citation type="journal article" date="2006" name="J. Proteome Res.">
        <title>Toward the complete yeast mitochondrial proteome: multidimensional separation techniques for mitochondrial proteomics.</title>
        <authorList>
            <person name="Reinders J."/>
            <person name="Zahedi R.P."/>
            <person name="Pfanner N."/>
            <person name="Meisinger C."/>
            <person name="Sickmann A."/>
        </authorList>
    </citation>
    <scope>SUBCELLULAR LOCATION [LARGE SCALE ANALYSIS]</scope>
    <scope>IDENTIFICATION BY MASS SPECTROMETRY</scope>
</reference>
<reference key="15">
    <citation type="journal article" date="2010" name="Biochemistry">
        <title>Molecular details of the yeast frataxin-Isu1 interaction during mitochondrial Fe-S cluster assembly.</title>
        <authorList>
            <person name="Cook J.D."/>
            <person name="Kondapalli K.C."/>
            <person name="Rawat S."/>
            <person name="Childs W.C."/>
            <person name="Murugesan Y."/>
            <person name="Dancis A."/>
            <person name="Stemmler T.L."/>
        </authorList>
    </citation>
    <scope>INTERACTION WITH FRATAXIN</scope>
</reference>
<reference key="16">
    <citation type="journal article" date="2012" name="J. Mol. Biol.">
        <title>Interaction of J-protein co-chaperone Jac1 with Fe-S scaffold Isu is indispensable in vivo and conserved in evolution.</title>
        <authorList>
            <person name="Ciesielski S.J."/>
            <person name="Schilke B.A."/>
            <person name="Osipiuk J."/>
            <person name="Bigelow L."/>
            <person name="Mulligan R."/>
            <person name="Majewska J."/>
            <person name="Joachimiak A."/>
            <person name="Marszalek J."/>
            <person name="Craig E.A."/>
            <person name="Dutkiewicz R."/>
        </authorList>
    </citation>
    <scope>INTERACTION WITH JAC1</scope>
</reference>
<reference key="17">
    <citation type="journal article" date="2013" name="J. Biol. Chem.">
        <title>Binding of the chaperone Jac1 protein and cysteine desulfurase Nfs1 to the iron-sulfur cluster scaffold Isu protein is mutually exclusive.</title>
        <authorList>
            <person name="Majewska J."/>
            <person name="Ciesielski S.J."/>
            <person name="Schilke B."/>
            <person name="Kominek J."/>
            <person name="Blenska A."/>
            <person name="Delewski W."/>
            <person name="Song J.Y."/>
            <person name="Marszalek J."/>
            <person name="Craig E.A."/>
            <person name="Dutkiewicz R."/>
        </authorList>
    </citation>
    <scope>INTERACTION WITH JAC1 AND NFS1</scope>
    <scope>MUTAGENESIS OF LEU-63; VAL-72 AND PHE-94</scope>
</reference>
<reference key="18">
    <citation type="journal article" date="2013" name="Mol. Biol. Cell">
        <title>The mitochondrial Hsp70 chaperone Ssq1 facilitates Fe/S cluster transfer from Isu1 to Grx5 by complex formation.</title>
        <authorList>
            <person name="Uzarska M.A."/>
            <person name="Dutkiewicz R."/>
            <person name="Freibert S.A."/>
            <person name="Lill R."/>
            <person name="Muehlenhoff U."/>
        </authorList>
    </citation>
    <scope>FUNCTION</scope>
    <scope>COFACTOR</scope>
    <scope>INTERACTION WITH JAC1 AND SSQ1</scope>
    <scope>DISRUPTION PHENOTYPE</scope>
</reference>
<reference key="19">
    <citation type="journal article" date="2014" name="J. Biol. Chem.">
        <title>Overlapping binding sites of the frataxin homologue assembly factor and the heat shock protein 70 transfer factor on the Isu iron-sulfur cluster scaffold protein.</title>
        <authorList>
            <person name="Manicki M."/>
            <person name="Majewska J."/>
            <person name="Ciesielski S."/>
            <person name="Schilke B."/>
            <person name="Blenska A."/>
            <person name="Kominek J."/>
            <person name="Marszalek J."/>
            <person name="Craig E.A."/>
            <person name="Dutkiewicz R."/>
        </authorList>
    </citation>
    <scope>INTERACTION WITH FRATAXIN AND NFS1</scope>
    <scope>MUTAGENESIS OF 134-PRO--LYS-136</scope>
</reference>
<reference key="20">
    <citation type="journal article" date="2014" name="Nat. Commun.">
        <title>Functional reconstitution of mitochondrial Fe/S cluster synthesis on Isu1 reveals the involvement of ferredoxin.</title>
        <authorList>
            <person name="Webert H."/>
            <person name="Freibert S.A."/>
            <person name="Gallo A."/>
            <person name="Heidenreich T."/>
            <person name="Linne U."/>
            <person name="Amlacher S."/>
            <person name="Hurt E."/>
            <person name="Muehlenhoff U."/>
            <person name="Banci L."/>
            <person name="Lill R."/>
        </authorList>
    </citation>
    <scope>FUNCTION</scope>
</reference>
<reference key="21">
    <citation type="journal article" date="2017" name="Metallomics">
        <title>In vitro characterization of a novel Isu homologue from Drosophila melanogaster for de novo FeS-cluster formation.</title>
        <authorList>
            <person name="Dzul S.P."/>
            <person name="Rocha A.G."/>
            <person name="Rawat S."/>
            <person name="Kandegedara A."/>
            <person name="Kusowski A."/>
            <person name="Pain J."/>
            <person name="Murari A."/>
            <person name="Pain D."/>
            <person name="Dancis A."/>
            <person name="Stemmler T.L."/>
        </authorList>
    </citation>
    <scope>FUNCTION</scope>
    <scope>COFACTOR</scope>
    <scope>DISRUPTION PHENOTYPE</scope>
</reference>
<reference key="22">
    <citation type="journal article" date="2019" name="J. Biol. Chem.">
        <title>Mitochondria export iron-sulfur and sulfur intermediates to the cytoplasm for iron-sulfur cluster assembly and tRNA thiolation in yeast.</title>
        <authorList>
            <person name="Pandey A.K."/>
            <person name="Pain J."/>
            <person name="Dancis A."/>
            <person name="Pain D."/>
        </authorList>
    </citation>
    <scope>FUNCTION</scope>
    <scope>DISRUPTION PHENOTYPE</scope>
    <scope>MUTAGENESIS OF MET-141</scope>
</reference>
<reference key="23">
    <citation type="journal article" date="2015" name="Proteins">
        <title>Molecular modeling of the binding modes of the iron-sulfur protein to the Jac1 co-chaperone from Saccharomyces cerevisiae by all-atom and coarse-grained approaches.</title>
        <authorList>
            <person name="Mozolewska M.A."/>
            <person name="Krupa P."/>
            <person name="Scheraga H.A."/>
            <person name="Liwo A."/>
        </authorList>
    </citation>
    <scope>3D-STRUCTURE MODELING OF INTERACTION WITH JAC1</scope>
</reference>
<reference evidence="29" key="24">
    <citation type="journal article" date="2016" name="J. Biol. Chem.">
        <title>Architecture of the Yeast Mitochondrial Iron-Sulfur Cluster Assembly Machinery: THE SUB-COMPLEX FORMED BY THE IRON DONOR, Yfh1 PROTEIN, AND THE SCAFFOLD, Isu1 PROTEIN.</title>
        <authorList>
            <person name="Ranatunga W."/>
            <person name="Gakh O."/>
            <person name="Galeano B.K."/>
            <person name="Smith D.Y. IV"/>
            <person name="Soederberg C.A."/>
            <person name="Al-Karadaghi S."/>
            <person name="Thompson J.R."/>
            <person name="Isaya G."/>
        </authorList>
    </citation>
    <scope>STRUCTURE BY ELECTRON MICROSCOPY (17.50 ANGSTROMS) OF 28-165 IN COMPLEX WITH YFH1</scope>
    <scope>SUBUNIT</scope>
    <scope>INTERACTION WITH YFH1</scope>
</reference>
<reference evidence="30" key="25">
    <citation type="journal article" date="2017" name="Metallomics">
        <title>Zinc and the iron donor frataxin regulate oligomerization of the scaffold protein to form new Fe-S cluster assembly centers.</title>
        <authorList>
            <person name="Galeano B.K."/>
            <person name="Ranatunga W."/>
            <person name="Gakh O."/>
            <person name="Smith D.Y."/>
            <person name="Thompson J.R."/>
            <person name="Isaya G."/>
        </authorList>
    </citation>
    <scope>STRUCTURE BY ELECTRON MICROSCOPY (15.60 ANGSTROMS) OF 28-165</scope>
    <scope>COFACTOR ZN(2+)</scope>
    <scope>SUBUNIT</scope>
    <scope>INTERACTION WITH YFH1</scope>
</reference>
<dbReference type="EMBL" id="U43703">
    <property type="protein sequence ID" value="AAB68224.1"/>
    <property type="molecule type" value="Genomic_DNA"/>
</dbReference>
<dbReference type="EMBL" id="BK006949">
    <property type="protein sequence ID" value="DAA11298.1"/>
    <property type="molecule type" value="Genomic_DNA"/>
</dbReference>
<dbReference type="PIR" id="S69049">
    <property type="entry name" value="S69049"/>
</dbReference>
<dbReference type="RefSeq" id="NP_015190.1">
    <property type="nucleotide sequence ID" value="NM_001183949.1"/>
</dbReference>
<dbReference type="PDB" id="5T0V">
    <property type="method" value="EM"/>
    <property type="resolution" value="17.50 A"/>
    <property type="chains" value="a/b/c/d/e/f/g/h/i/j/k/l/m/n/o/p/q/r/s/t/u/v/w/x=28-165"/>
</dbReference>
<dbReference type="PDB" id="5TRE">
    <property type="method" value="EM"/>
    <property type="resolution" value="15.60 A"/>
    <property type="chains" value="a/b/c/d/e/f/g/h/i/j/k/l/m/n/o/p/q/r/s/t/u/v/w/x=28-165"/>
</dbReference>
<dbReference type="PDBsum" id="5T0V"/>
<dbReference type="PDBsum" id="5TRE"/>
<dbReference type="EMDB" id="EMD-8341"/>
<dbReference type="EMDB" id="EMD-8458"/>
<dbReference type="SMR" id="Q03020"/>
<dbReference type="BioGRID" id="36046">
    <property type="interactions" value="264"/>
</dbReference>
<dbReference type="ComplexPortal" id="CPX-392">
    <property type="entry name" value="Mitochondrial NIAUFX iron-sulfur cluster assembly complex"/>
</dbReference>
<dbReference type="DIP" id="DIP-6556N"/>
<dbReference type="FunCoup" id="Q03020">
    <property type="interactions" value="640"/>
</dbReference>
<dbReference type="IntAct" id="Q03020">
    <property type="interactions" value="17"/>
</dbReference>
<dbReference type="MINT" id="Q03020"/>
<dbReference type="STRING" id="4932.YPL135W"/>
<dbReference type="PaxDb" id="4932-YPL135W"/>
<dbReference type="PeptideAtlas" id="Q03020"/>
<dbReference type="DNASU" id="855968"/>
<dbReference type="EnsemblFungi" id="YPL135W_mRNA">
    <property type="protein sequence ID" value="YPL135W"/>
    <property type="gene ID" value="YPL135W"/>
</dbReference>
<dbReference type="GeneID" id="855968"/>
<dbReference type="KEGG" id="sce:YPL135W"/>
<dbReference type="AGR" id="SGD:S000006056"/>
<dbReference type="SGD" id="S000006056">
    <property type="gene designation" value="ISU1"/>
</dbReference>
<dbReference type="VEuPathDB" id="FungiDB:YPL135W"/>
<dbReference type="eggNOG" id="KOG3361">
    <property type="taxonomic scope" value="Eukaryota"/>
</dbReference>
<dbReference type="GeneTree" id="ENSGT00390000015813"/>
<dbReference type="HOGENOM" id="CLU_079283_5_0_1"/>
<dbReference type="InParanoid" id="Q03020"/>
<dbReference type="OMA" id="TMDRSAG"/>
<dbReference type="OrthoDB" id="1925777at2759"/>
<dbReference type="BioCyc" id="MetaCyc:G3O-34034-MONOMER"/>
<dbReference type="BioCyc" id="YEAST:G3O-34034-MONOMER"/>
<dbReference type="Reactome" id="R-SCE-1362409">
    <property type="pathway name" value="Mitochondrial iron-sulfur cluster biogenesis"/>
</dbReference>
<dbReference type="Reactome" id="R-SCE-9865881">
    <property type="pathway name" value="Complex III assembly"/>
</dbReference>
<dbReference type="UniPathway" id="UPA00266"/>
<dbReference type="BioGRID-ORCS" id="855968">
    <property type="hits" value="3 hits in 10 CRISPR screens"/>
</dbReference>
<dbReference type="PRO" id="PR:Q03020"/>
<dbReference type="Proteomes" id="UP000002311">
    <property type="component" value="Chromosome XVI"/>
</dbReference>
<dbReference type="RNAct" id="Q03020">
    <property type="molecule type" value="protein"/>
</dbReference>
<dbReference type="GO" id="GO:0005737">
    <property type="term" value="C:cytoplasm"/>
    <property type="evidence" value="ECO:0000318"/>
    <property type="project" value="GO_Central"/>
</dbReference>
<dbReference type="GO" id="GO:1990229">
    <property type="term" value="C:iron-sulfur cluster assembly complex"/>
    <property type="evidence" value="ECO:0000303"/>
    <property type="project" value="ComplexPortal"/>
</dbReference>
<dbReference type="GO" id="GO:0005759">
    <property type="term" value="C:mitochondrial matrix"/>
    <property type="evidence" value="ECO:0000314"/>
    <property type="project" value="SGD"/>
</dbReference>
<dbReference type="GO" id="GO:0005739">
    <property type="term" value="C:mitochondrion"/>
    <property type="evidence" value="ECO:0007005"/>
    <property type="project" value="SGD"/>
</dbReference>
<dbReference type="GO" id="GO:0051537">
    <property type="term" value="F:2 iron, 2 sulfur cluster binding"/>
    <property type="evidence" value="ECO:0000318"/>
    <property type="project" value="GO_Central"/>
</dbReference>
<dbReference type="GO" id="GO:0001671">
    <property type="term" value="F:ATPase activator activity"/>
    <property type="evidence" value="ECO:0000314"/>
    <property type="project" value="SGD"/>
</dbReference>
<dbReference type="GO" id="GO:0008198">
    <property type="term" value="F:ferrous iron binding"/>
    <property type="evidence" value="ECO:0000314"/>
    <property type="project" value="SGD"/>
</dbReference>
<dbReference type="GO" id="GO:0005506">
    <property type="term" value="F:iron ion binding"/>
    <property type="evidence" value="ECO:0000314"/>
    <property type="project" value="SGD"/>
</dbReference>
<dbReference type="GO" id="GO:0008270">
    <property type="term" value="F:zinc ion binding"/>
    <property type="evidence" value="ECO:0000314"/>
    <property type="project" value="SGD"/>
</dbReference>
<dbReference type="GO" id="GO:0006879">
    <property type="term" value="P:intracellular iron ion homeostasis"/>
    <property type="evidence" value="ECO:0000315"/>
    <property type="project" value="SGD"/>
</dbReference>
<dbReference type="GO" id="GO:0016226">
    <property type="term" value="P:iron-sulfur cluster assembly"/>
    <property type="evidence" value="ECO:0000315"/>
    <property type="project" value="SGD"/>
</dbReference>
<dbReference type="GO" id="GO:0002098">
    <property type="term" value="P:tRNA wobble uridine modification"/>
    <property type="evidence" value="ECO:0000316"/>
    <property type="project" value="SGD"/>
</dbReference>
<dbReference type="CDD" id="cd06664">
    <property type="entry name" value="IscU_like"/>
    <property type="match status" value="1"/>
</dbReference>
<dbReference type="FunFam" id="3.90.1010.10:FF:000005">
    <property type="entry name" value="Iron-sulfur cluster assembly protein"/>
    <property type="match status" value="1"/>
</dbReference>
<dbReference type="Gene3D" id="3.90.1010.10">
    <property type="match status" value="1"/>
</dbReference>
<dbReference type="InterPro" id="IPR011339">
    <property type="entry name" value="ISCU"/>
</dbReference>
<dbReference type="InterPro" id="IPR002871">
    <property type="entry name" value="NIF_FeS_clus_asmbl_NifU_N"/>
</dbReference>
<dbReference type="NCBIfam" id="TIGR01999">
    <property type="entry name" value="iscU"/>
    <property type="match status" value="1"/>
</dbReference>
<dbReference type="PANTHER" id="PTHR10093">
    <property type="entry name" value="IRON-SULFUR CLUSTER ASSEMBLY ENZYME NIFU HOMOLOG"/>
    <property type="match status" value="1"/>
</dbReference>
<dbReference type="Pfam" id="PF01592">
    <property type="entry name" value="NifU_N"/>
    <property type="match status" value="1"/>
</dbReference>
<dbReference type="SUPFAM" id="SSF82649">
    <property type="entry name" value="SufE/NifU"/>
    <property type="match status" value="1"/>
</dbReference>
<evidence type="ECO:0000250" key="1">
    <source>
        <dbReference type="UniProtKB" id="Q9UTC6"/>
    </source>
</evidence>
<evidence type="ECO:0000255" key="2"/>
<evidence type="ECO:0000269" key="3">
    <source>
    </source>
</evidence>
<evidence type="ECO:0000269" key="4">
    <source>
    </source>
</evidence>
<evidence type="ECO:0000269" key="5">
    <source>
    </source>
</evidence>
<evidence type="ECO:0000269" key="6">
    <source>
    </source>
</evidence>
<evidence type="ECO:0000269" key="7">
    <source>
    </source>
</evidence>
<evidence type="ECO:0000269" key="8">
    <source>
    </source>
</evidence>
<evidence type="ECO:0000269" key="9">
    <source>
    </source>
</evidence>
<evidence type="ECO:0000269" key="10">
    <source>
    </source>
</evidence>
<evidence type="ECO:0000269" key="11">
    <source>
    </source>
</evidence>
<evidence type="ECO:0000269" key="12">
    <source>
    </source>
</evidence>
<evidence type="ECO:0000269" key="13">
    <source>
    </source>
</evidence>
<evidence type="ECO:0000269" key="14">
    <source>
    </source>
</evidence>
<evidence type="ECO:0000269" key="15">
    <source>
    </source>
</evidence>
<evidence type="ECO:0000269" key="16">
    <source>
    </source>
</evidence>
<evidence type="ECO:0000269" key="17">
    <source>
    </source>
</evidence>
<evidence type="ECO:0000269" key="18">
    <source>
    </source>
</evidence>
<evidence type="ECO:0000269" key="19">
    <source>
    </source>
</evidence>
<evidence type="ECO:0000269" key="20">
    <source>
    </source>
</evidence>
<evidence type="ECO:0000269" key="21">
    <source>
    </source>
</evidence>
<evidence type="ECO:0000269" key="22">
    <source>
    </source>
</evidence>
<evidence type="ECO:0000269" key="23">
    <source>
    </source>
</evidence>
<evidence type="ECO:0000269" key="24">
    <source>
    </source>
</evidence>
<evidence type="ECO:0000305" key="25"/>
<evidence type="ECO:0000305" key="26">
    <source>
    </source>
</evidence>
<evidence type="ECO:0000312" key="27">
    <source>
        <dbReference type="Proteomes" id="UP000002311"/>
    </source>
</evidence>
<evidence type="ECO:0000312" key="28">
    <source>
        <dbReference type="SGD" id="S000006056"/>
    </source>
</evidence>
<evidence type="ECO:0007744" key="29">
    <source>
        <dbReference type="PDB" id="5T0V"/>
    </source>
</evidence>
<evidence type="ECO:0007744" key="30">
    <source>
        <dbReference type="PDB" id="5TRE"/>
    </source>
</evidence>
<protein>
    <recommendedName>
        <fullName>Iron sulfur cluster assembly protein 1, mitochondrial</fullName>
    </recommendedName>
    <alternativeName>
        <fullName>Iron sulfur cluster scaffold protein 1</fullName>
    </alternativeName>
</protein>
<accession>Q03020</accession>
<accession>D6W3N2</accession>
<name>ISU1_YEAST</name>
<feature type="transit peptide" description="Mitochondrion" evidence="2">
    <location>
        <begin position="1"/>
        <end position="27"/>
    </location>
</feature>
<feature type="chain" id="PRO_0000019700" description="Iron sulfur cluster assembly protein 1, mitochondrial">
    <location>
        <begin position="28"/>
        <end position="165"/>
    </location>
</feature>
<feature type="region of interest" description="SSQ1 binding region" evidence="10">
    <location>
        <begin position="132"/>
        <end position="136"/>
    </location>
</feature>
<feature type="mutagenesis site" description="In ISU1(LVF/SSS); no growth and abolishes interaction with both JAC1 and NFS1; when associated with S-72 and S-94." evidence="4">
    <original>L</original>
    <variation>S</variation>
    <location>
        <position position="63"/>
    </location>
</feature>
<feature type="mutagenesis site" description="Fails to complement an isu1 deletion mutation." evidence="4">
    <original>C</original>
    <variation>A</variation>
    <location>
        <position position="69"/>
    </location>
</feature>
<feature type="mutagenesis site" description="In ISU1(LVF/SSS); no growth and abolishes interaction with both JAC1 and NFS1; when associated with S-63 and S-94." evidence="4">
    <original>V</original>
    <variation>S</variation>
    <location>
        <position position="72"/>
    </location>
</feature>
<feature type="mutagenesis site" description="In ISU1(LVF/SSS); no growth and abolishes interaction with both JAC1 and NFS1; when associated with S-63 and S-72." evidence="4">
    <original>F</original>
    <variation>S</variation>
    <location>
        <position position="94"/>
    </location>
</feature>
<feature type="mutagenesis site" description="Fails to complement an isu1 deletion mutation." evidence="4">
    <original>C</original>
    <variation>A</variation>
    <location>
        <position position="96"/>
    </location>
</feature>
<feature type="mutagenesis site" description="No growth." evidence="10">
    <original>L</original>
    <variation>A</variation>
    <location>
        <position position="132"/>
    </location>
</feature>
<feature type="mutagenesis site" description="Wild-type growth." evidence="10">
    <original>P</original>
    <variation>A</variation>
    <location>
        <position position="133"/>
    </location>
</feature>
<feature type="mutagenesis site" description="No growth; no interaction with frataxin and SSQ1." evidence="10 19">
    <original>PVK</original>
    <variation>AAA</variation>
    <location>
        <begin position="134"/>
        <end position="136"/>
    </location>
</feature>
<feature type="mutagenesis site" description="Slow growth; no interaction with SSQ1." evidence="10">
    <original>P</original>
    <variation>A</variation>
    <location>
        <position position="134"/>
    </location>
</feature>
<feature type="mutagenesis site" description="Wild-type growth; no interaction with SSQ1." evidence="10">
    <original>V</original>
    <variation>A</variation>
    <location>
        <position position="135"/>
    </location>
</feature>
<feature type="mutagenesis site" description="No growth; no interaction with SSQ1." evidence="10">
    <original>K</original>
    <variation>A</variation>
    <location>
        <position position="136"/>
    </location>
</feature>
<feature type="mutagenesis site" description="Fails to complement an isu1 deletion mutation." evidence="4">
    <original>C</original>
    <variation>A</variation>
    <location>
        <position position="139"/>
    </location>
</feature>
<feature type="mutagenesis site" description="Disrupts iron-sulfur (Fe-S) cluster assembly." evidence="24">
    <original>M</original>
    <variation>E</variation>
    <location>
        <position position="141"/>
    </location>
</feature>
<gene>
    <name evidence="28" type="primary">ISU1</name>
    <name type="synonym">NUA1</name>
    <name evidence="28" type="ordered locus">YPL135W</name>
</gene>
<comment type="function">
    <text evidence="4 7 9 10 12 13 17 20 22 24">Scaffold protein for the de novo synthesis of iron-sulfur (Fe-S) clusters within mitochondria, which is required for maturation of both mitochondrial and cytoplasmic [2Fe-2S] and [4Fe-4S] proteins (PubMed:10588895, PubMed:12970193, PubMed:14741370, PubMed:15123690, PubMed:16341089, PubMed:27738674, PubMed:31040179). First, a [2Fe-2S] cluster is transiently assembled on the scaffold proteins ISU1 and ISU2 (PubMed:12970193, PubMed:16341089, PubMed:31040179). In a second step, the cluster is released from ISU1/ISU2, transferred to glutaredoxin GRX5, followed by the formation of mitochondrial [2Fe-2S] proteins, the synthesis of [4Fe-4S] clusters and their target-specific insertion into the recipient apoproteins (PubMed:12970193, PubMed:23615440). Cluster assembly on ISU1/ISU2 depends on the function of the cysteine desulfurase complex NFS1-ISD11, which serves as the sulfur donor for cluster synthesis, the iron-binding protein frataxin (YFH1) as the putative iron donor, and the electron transfer chain comprised of ferredoxin reductase ARH1 and ferredoxin YAH1, which receive their electrons from NADH (PubMed:12970193, PubMed:14741370, PubMed:16341089, PubMed:25358379, PubMed:31040179). Fe-S cluster release from ISU1/ISU2 is achieved by interaction with the Hsp70 chaperone SSQ1, assisted by the DnaJ-like co-chaperone JAC1 and the nucleotide exchange factor MGE1 (PubMed:14741370, PubMed:15123690, PubMed:16431909, PubMed:23615440, PubMed:31040179). ISU1 is the major isoform in yeast, while ISU2 is not detectable in cells grown to stationary phase (PubMed:10588895). Also involved in production of a sulfur precursor required for thiolation of cytoplasmic tRNAs (PubMed:31040179).</text>
</comment>
<comment type="cofactor">
    <cofactor evidence="17 22 26">
        <name>[2Fe-2S] cluster</name>
        <dbReference type="ChEBI" id="CHEBI:190135"/>
    </cofactor>
    <cofactor evidence="23">
        <name>Zn(2+)</name>
        <dbReference type="ChEBI" id="CHEBI:29105"/>
    </cofactor>
    <text evidence="1 23">Binds 1 [2Fe-2S] cluster per subunit (By similarity). Zn(2+) binding stabilizes the monomeric form (PubMed:28548666).</text>
</comment>
<comment type="pathway">
    <text evidence="4 10 11 13">Cofactor biosynthesis; iron-sulfur cluster biosynthesis.</text>
</comment>
<comment type="subunit">
    <text evidence="5 6 9 10 15 16 17 18 19 20 21 23">Homodimer, but can exist as monomers or trimers (PubMed:26941001, PubMed:28548666). Oligomerization may be regulated by Zn(2+) availability (PubMed:28548666). Component of the core Fe-S cluster (ISC) assembly machinery. Interacts with YFH1/frataxin with a 1 to 1 stoichiometry; the interaction is direct (PubMed:12947415, PubMed:14741370, PubMed:20815377, PubMed:25228696, PubMed:26941001, PubMed:28548666). Interacts with the mitochondrial co-chaperones JAC1 and SSQ1 (PubMed:12756240, PubMed:15123690, PubMed:22306468, PubMed:23615440, PubMed:23946486). Interacts with NFS1 (PubMed:23946486, PubMed:25228696). Interacts with YAH1/ferredoxin; interacts with the reduced form (PubMed:25358379).</text>
</comment>
<comment type="interaction">
    <interactant intactId="EBI-29901">
        <id>Q03020</id>
    </interactant>
    <interactant intactId="EBI-23714">
        <id>P53193</id>
        <label>JAC1</label>
    </interactant>
    <organismsDiffer>false</organismsDiffer>
    <experiments>3</experiments>
</comment>
<comment type="interaction">
    <interactant intactId="EBI-29901">
        <id>Q03020</id>
    </interactant>
    <interactant intactId="EBI-11991">
        <id>P25374</id>
        <label>NFS1</label>
    </interactant>
    <organismsDiffer>false</organismsDiffer>
    <experiments>4</experiments>
</comment>
<comment type="interaction">
    <interactant intactId="EBI-29901">
        <id>Q03020</id>
    </interactant>
    <interactant intactId="EBI-35227">
        <id>Q05931</id>
        <label>SSQ1</label>
    </interactant>
    <organismsDiffer>false</organismsDiffer>
    <experiments>5</experiments>
</comment>
<comment type="interaction">
    <interactant intactId="EBI-29901">
        <id>Q03020</id>
    </interactant>
    <interactant intactId="EBI-2206814">
        <id>Q07540</id>
        <label>YFH1</label>
    </interactant>
    <organismsDiffer>false</organismsDiffer>
    <experiments>4</experiments>
</comment>
<comment type="subcellular location">
    <subcellularLocation>
        <location evidence="3 4 11 14">Mitochondrion matrix</location>
    </subcellularLocation>
</comment>
<comment type="disruption phenotype">
    <text evidence="3 4 17 22 24">Cells deleted for both ISU1 and ISU2 have decreased activity of several respiratory enzymes that contain Fe-S clusters (PubMed:10468587, PubMed:10588895). As a result, cells grow poorly on carbon sources requiring respiration and also accumulate abnormally high levels of iron in their mitochondria (PubMed:10468587, PubMed:10588895). Knockdown of ISU1 in ISU2 knockout cells reduces cell growth, decreases cytosolic tRNA thiolation, and increases association between SSQ1 and GRX5 (PubMed:23615440, PubMed:27738674, PubMed:31040179).</text>
</comment>
<comment type="miscellaneous">
    <text evidence="8">Present with 10800 molecules/cell in log phase SD medium.</text>
</comment>
<comment type="similarity">
    <text evidence="25">Belongs to the NifU family.</text>
</comment>